<evidence type="ECO:0000255" key="1">
    <source>
        <dbReference type="HAMAP-Rule" id="MF_03132"/>
    </source>
</evidence>
<accession>B9PVB9</accession>
<accession>B6KPW9</accession>
<accession>B9QI57</accession>
<protein>
    <recommendedName>
        <fullName evidence="1">Eukaryotic translation initiation factor 6</fullName>
        <shortName evidence="1">eIF-6</shortName>
    </recommendedName>
</protein>
<feature type="chain" id="PRO_0000402102" description="Eukaryotic translation initiation factor 6">
    <location>
        <begin position="1"/>
        <end position="264"/>
    </location>
</feature>
<comment type="function">
    <text evidence="1">Binds to the 60S ribosomal subunit and prevents its association with the 40S ribosomal subunit to form the 80S initiation complex in the cytoplasm. May also be involved in ribosome biogenesis.</text>
</comment>
<comment type="subunit">
    <text evidence="1">Monomer. Associates with the 60S ribosomal subunit.</text>
</comment>
<comment type="subcellular location">
    <subcellularLocation>
        <location evidence="1">Cytoplasm</location>
    </subcellularLocation>
    <subcellularLocation>
        <location evidence="1">Nucleus</location>
        <location evidence="1">Nucleolus</location>
    </subcellularLocation>
    <text evidence="1">Shuttles between cytoplasm and nucleus/nucleolus.</text>
</comment>
<comment type="similarity">
    <text evidence="1">Belongs to the eIF-6 family.</text>
</comment>
<dbReference type="EMBL" id="AAYL02000285">
    <property type="protein sequence ID" value="ESS29715.1"/>
    <property type="molecule type" value="Genomic_DNA"/>
</dbReference>
<dbReference type="SMR" id="B9PVB9"/>
<dbReference type="STRING" id="432359.B9PVB9"/>
<dbReference type="PaxDb" id="5811-TGME49_118700"/>
<dbReference type="EnsemblProtists" id="ESS29715">
    <property type="protein sequence ID" value="ESS29715"/>
    <property type="gene ID" value="TGVEG_318700"/>
</dbReference>
<dbReference type="EnsemblProtists" id="TGME49_318700-t26_1">
    <property type="protein sequence ID" value="TGME49_318700-t26_1"/>
    <property type="gene ID" value="TGME49_318700"/>
</dbReference>
<dbReference type="VEuPathDB" id="ToxoDB:TGVEG_318700"/>
<dbReference type="eggNOG" id="KOG3185">
    <property type="taxonomic scope" value="Eukaryota"/>
</dbReference>
<dbReference type="Proteomes" id="UP000002226">
    <property type="component" value="Partially assembled WGS sequence"/>
</dbReference>
<dbReference type="GO" id="GO:0005737">
    <property type="term" value="C:cytoplasm"/>
    <property type="evidence" value="ECO:0007669"/>
    <property type="project" value="UniProtKB-SubCell"/>
</dbReference>
<dbReference type="GO" id="GO:0005730">
    <property type="term" value="C:nucleolus"/>
    <property type="evidence" value="ECO:0007669"/>
    <property type="project" value="UniProtKB-SubCell"/>
</dbReference>
<dbReference type="GO" id="GO:0043023">
    <property type="term" value="F:ribosomal large subunit binding"/>
    <property type="evidence" value="ECO:0007669"/>
    <property type="project" value="UniProtKB-UniRule"/>
</dbReference>
<dbReference type="GO" id="GO:0003743">
    <property type="term" value="F:translation initiation factor activity"/>
    <property type="evidence" value="ECO:0007669"/>
    <property type="project" value="UniProtKB-UniRule"/>
</dbReference>
<dbReference type="GO" id="GO:0042256">
    <property type="term" value="P:cytosolic ribosome assembly"/>
    <property type="evidence" value="ECO:0007669"/>
    <property type="project" value="UniProtKB-UniRule"/>
</dbReference>
<dbReference type="GO" id="GO:0042273">
    <property type="term" value="P:ribosomal large subunit biogenesis"/>
    <property type="evidence" value="ECO:0007669"/>
    <property type="project" value="UniProtKB-UniRule"/>
</dbReference>
<dbReference type="CDD" id="cd00527">
    <property type="entry name" value="IF6"/>
    <property type="match status" value="1"/>
</dbReference>
<dbReference type="FunFam" id="3.75.10.10:FF:000006">
    <property type="entry name" value="Eukaryotic translation initiation factor 6"/>
    <property type="match status" value="1"/>
</dbReference>
<dbReference type="Gene3D" id="3.75.10.10">
    <property type="entry name" value="L-arginine/glycine Amidinotransferase, Chain A"/>
    <property type="match status" value="1"/>
</dbReference>
<dbReference type="HAMAP" id="MF_00032">
    <property type="entry name" value="eIF_6"/>
    <property type="match status" value="1"/>
</dbReference>
<dbReference type="InterPro" id="IPR002769">
    <property type="entry name" value="eIF6"/>
</dbReference>
<dbReference type="NCBIfam" id="TIGR00323">
    <property type="entry name" value="eIF-6"/>
    <property type="match status" value="1"/>
</dbReference>
<dbReference type="PANTHER" id="PTHR10784">
    <property type="entry name" value="TRANSLATION INITIATION FACTOR 6"/>
    <property type="match status" value="1"/>
</dbReference>
<dbReference type="Pfam" id="PF01912">
    <property type="entry name" value="eIF-6"/>
    <property type="match status" value="1"/>
</dbReference>
<dbReference type="PIRSF" id="PIRSF006413">
    <property type="entry name" value="IF-6"/>
    <property type="match status" value="1"/>
</dbReference>
<dbReference type="SMART" id="SM00654">
    <property type="entry name" value="eIF6"/>
    <property type="match status" value="1"/>
</dbReference>
<dbReference type="SUPFAM" id="SSF55909">
    <property type="entry name" value="Pentein"/>
    <property type="match status" value="1"/>
</dbReference>
<proteinExistence type="inferred from homology"/>
<gene>
    <name evidence="1" type="primary">EIF6</name>
    <name type="ORF">TGVEG_318700</name>
</gene>
<name>IF6_TOXGV</name>
<reference key="1">
    <citation type="submission" date="2008-03" db="EMBL/GenBank/DDBJ databases">
        <title>Annotation of Toxoplasma gondii VEG.</title>
        <authorList>
            <person name="Lorenzi H."/>
            <person name="Inman J."/>
            <person name="Amedeo P."/>
            <person name="Brunk B."/>
            <person name="Roos D."/>
            <person name="Caler E."/>
        </authorList>
    </citation>
    <scope>NUCLEOTIDE SEQUENCE [LARGE SCALE GENOMIC DNA]</scope>
    <source>
        <strain>ATCC 50861 / VEG</strain>
    </source>
</reference>
<sequence>MNASCAALWSLGSSRMATRAQFESSNEVGVFAKLTNSYCLVALGGSEHFYSTLEAELAPHIPVVHATVGGTRVIGRVCVGNRRGLIVPSITTDQELQHLRNSLPDSVEIRRVEERLSALGNNVACNDYVALLHTDMDKETEEIVQDVLGVEAFRATIGKQTLVGSYCHFTNQGGLVHVMTPVEDMEELSQLLQVPLTAGTVNRGSDLVGAGLIANDWAAFCGMDTTATELAVVERIFKIATRNQQKLNLVDDLTLRSSLIDTLS</sequence>
<organism>
    <name type="scientific">Toxoplasma gondii (strain ATCC 50861 / VEG)</name>
    <dbReference type="NCBI Taxonomy" id="432359"/>
    <lineage>
        <taxon>Eukaryota</taxon>
        <taxon>Sar</taxon>
        <taxon>Alveolata</taxon>
        <taxon>Apicomplexa</taxon>
        <taxon>Conoidasida</taxon>
        <taxon>Coccidia</taxon>
        <taxon>Eucoccidiorida</taxon>
        <taxon>Eimeriorina</taxon>
        <taxon>Sarcocystidae</taxon>
        <taxon>Toxoplasma</taxon>
    </lineage>
</organism>
<keyword id="KW-0963">Cytoplasm</keyword>
<keyword id="KW-0396">Initiation factor</keyword>
<keyword id="KW-0539">Nucleus</keyword>
<keyword id="KW-0648">Protein biosynthesis</keyword>
<keyword id="KW-1185">Reference proteome</keyword>
<keyword id="KW-0690">Ribosome biogenesis</keyword>